<organism>
    <name type="scientific">Dickeya dadantii (strain 3937)</name>
    <name type="common">Erwinia chrysanthemi (strain 3937)</name>
    <dbReference type="NCBI Taxonomy" id="198628"/>
    <lineage>
        <taxon>Bacteria</taxon>
        <taxon>Pseudomonadati</taxon>
        <taxon>Pseudomonadota</taxon>
        <taxon>Gammaproteobacteria</taxon>
        <taxon>Enterobacterales</taxon>
        <taxon>Pectobacteriaceae</taxon>
        <taxon>Dickeya</taxon>
    </lineage>
</organism>
<proteinExistence type="inferred from homology"/>
<protein>
    <recommendedName>
        <fullName evidence="1">Lipid A acyltransferase PagP</fullName>
        <ecNumber evidence="1">2.3.1.251</ecNumber>
    </recommendedName>
    <alternativeName>
        <fullName evidence="1">Lipid A acylation protein</fullName>
    </alternativeName>
</protein>
<feature type="signal peptide" evidence="1">
    <location>
        <begin position="1"/>
        <end position="24"/>
    </location>
</feature>
<feature type="chain" id="PRO_0000414433" description="Lipid A acyltransferase PagP">
    <location>
        <begin position="25"/>
        <end position="200"/>
    </location>
</feature>
<feature type="active site" evidence="1">
    <location>
        <position position="72"/>
    </location>
</feature>
<feature type="active site" evidence="1">
    <location>
        <position position="115"/>
    </location>
</feature>
<feature type="active site" evidence="1">
    <location>
        <position position="116"/>
    </location>
</feature>
<feature type="site" description="Role in lipopolysaccharide recognition" evidence="1">
    <location>
        <position position="81"/>
    </location>
</feature>
<comment type="function">
    <text evidence="1">Transfers a fatty acid residue from the sn-1 position of a phospholipid to the N-linked hydroxyfatty acid chain on the proximal unit of lipid A or its precursors.</text>
</comment>
<comment type="catalytic activity">
    <reaction evidence="1">
        <text>a lipid A + a 1,2-diacyl-sn-glycero-3-phosphocholine = a hepta-acyl lipid A + a 2-acyl-sn-glycero-3-phosphocholine</text>
        <dbReference type="Rhea" id="RHEA:74275"/>
        <dbReference type="ChEBI" id="CHEBI:57643"/>
        <dbReference type="ChEBI" id="CHEBI:57875"/>
        <dbReference type="ChEBI" id="CHEBI:193141"/>
        <dbReference type="ChEBI" id="CHEBI:193142"/>
        <dbReference type="EC" id="2.3.1.251"/>
    </reaction>
</comment>
<comment type="catalytic activity">
    <reaction evidence="1">
        <text>a lipid IVA + a 1,2-diacyl-sn-glycero-3-phosphocholine = a lipid IVB + a 2-acyl-sn-glycero-3-phosphocholine</text>
        <dbReference type="Rhea" id="RHEA:74279"/>
        <dbReference type="ChEBI" id="CHEBI:57643"/>
        <dbReference type="ChEBI" id="CHEBI:57875"/>
        <dbReference type="ChEBI" id="CHEBI:176425"/>
        <dbReference type="ChEBI" id="CHEBI:193143"/>
        <dbReference type="EC" id="2.3.1.251"/>
    </reaction>
</comment>
<comment type="catalytic activity">
    <reaction evidence="1">
        <text>a lipid IIA + a 1,2-diacyl-sn-glycero-3-phosphocholine = a lipid IIB + a 2-acyl-sn-glycero-3-phosphocholine</text>
        <dbReference type="Rhea" id="RHEA:74283"/>
        <dbReference type="ChEBI" id="CHEBI:57643"/>
        <dbReference type="ChEBI" id="CHEBI:57875"/>
        <dbReference type="ChEBI" id="CHEBI:193144"/>
        <dbReference type="ChEBI" id="CHEBI:193145"/>
        <dbReference type="EC" id="2.3.1.251"/>
    </reaction>
</comment>
<comment type="subunit">
    <text evidence="1">Homodimer.</text>
</comment>
<comment type="subcellular location">
    <subcellularLocation>
        <location evidence="1">Cell outer membrane</location>
    </subcellularLocation>
</comment>
<comment type="similarity">
    <text evidence="1 2">Belongs to the lipid A palmitoyltransferase family.</text>
</comment>
<comment type="sequence caution" evidence="2">
    <conflict type="erroneous initiation">
        <sequence resource="EMBL-CDS" id="ADN00517"/>
    </conflict>
    <text>Truncated N-terminus.</text>
</comment>
<keyword id="KW-0012">Acyltransferase</keyword>
<keyword id="KW-0998">Cell outer membrane</keyword>
<keyword id="KW-0472">Membrane</keyword>
<keyword id="KW-1185">Reference proteome</keyword>
<keyword id="KW-0732">Signal</keyword>
<keyword id="KW-0808">Transferase</keyword>
<gene>
    <name evidence="1" type="primary">pagP</name>
    <name type="ordered locus">Dda3937_02050</name>
</gene>
<sequence>MRLKLTSHTCLFALSSLLVTPAFAAPSGDNTASDAVERGSEPGIWQRAGNNLSDTWHHWQSQELYVPAMTWHNRWTYDKAKTDRYNERPWGAGYGVSRLDRDGDWHSLYLMAFKDSFNKWEPIGGYGYEKRWRPLENQDVQLGLGFTAGVTMRDNWKYIPIPVLLPMASVSYQRLSFQATYIPGTHNNGNVFFAWLRWQF</sequence>
<name>PAGP_DICD3</name>
<evidence type="ECO:0000255" key="1">
    <source>
        <dbReference type="HAMAP-Rule" id="MF_00837"/>
    </source>
</evidence>
<evidence type="ECO:0000305" key="2"/>
<accession>E0SLJ5</accession>
<dbReference type="EC" id="2.3.1.251" evidence="1"/>
<dbReference type="EMBL" id="CP002038">
    <property type="protein sequence ID" value="ADN00517.1"/>
    <property type="status" value="ALT_INIT"/>
    <property type="molecule type" value="Genomic_DNA"/>
</dbReference>
<dbReference type="RefSeq" id="WP_139348375.1">
    <property type="nucleotide sequence ID" value="NC_014500.1"/>
</dbReference>
<dbReference type="SMR" id="E0SLJ5"/>
<dbReference type="STRING" id="198628.Dda3937_02050"/>
<dbReference type="KEGG" id="ddd:Dda3937_02050"/>
<dbReference type="eggNOG" id="ENOG502Z7SY">
    <property type="taxonomic scope" value="Bacteria"/>
</dbReference>
<dbReference type="HOGENOM" id="CLU_104099_0_0_6"/>
<dbReference type="OrthoDB" id="9156803at2"/>
<dbReference type="Proteomes" id="UP000006859">
    <property type="component" value="Chromosome"/>
</dbReference>
<dbReference type="GO" id="GO:0009279">
    <property type="term" value="C:cell outer membrane"/>
    <property type="evidence" value="ECO:0007669"/>
    <property type="project" value="UniProtKB-SubCell"/>
</dbReference>
<dbReference type="GO" id="GO:0016746">
    <property type="term" value="F:acyltransferase activity"/>
    <property type="evidence" value="ECO:0007669"/>
    <property type="project" value="UniProtKB-UniRule"/>
</dbReference>
<dbReference type="GO" id="GO:0009245">
    <property type="term" value="P:lipid A biosynthetic process"/>
    <property type="evidence" value="ECO:0007669"/>
    <property type="project" value="UniProtKB-UniRule"/>
</dbReference>
<dbReference type="FunFam" id="2.40.160.20:FF:000002">
    <property type="entry name" value="Lipid A palmitoyltransferase PagP"/>
    <property type="match status" value="1"/>
</dbReference>
<dbReference type="Gene3D" id="2.40.160.20">
    <property type="match status" value="1"/>
</dbReference>
<dbReference type="HAMAP" id="MF_00837">
    <property type="entry name" value="PagP_transferase"/>
    <property type="match status" value="1"/>
</dbReference>
<dbReference type="InterPro" id="IPR009746">
    <property type="entry name" value="LipidA_acyl_PagP"/>
</dbReference>
<dbReference type="InterPro" id="IPR011250">
    <property type="entry name" value="OMP/PagP_b-brl"/>
</dbReference>
<dbReference type="NCBIfam" id="NF008271">
    <property type="entry name" value="PRK11045.1"/>
    <property type="match status" value="1"/>
</dbReference>
<dbReference type="Pfam" id="PF07017">
    <property type="entry name" value="PagP"/>
    <property type="match status" value="1"/>
</dbReference>
<dbReference type="SUPFAM" id="SSF56925">
    <property type="entry name" value="OMPA-like"/>
    <property type="match status" value="1"/>
</dbReference>
<reference key="1">
    <citation type="journal article" date="2011" name="J. Bacteriol.">
        <title>Genome sequence of the plant-pathogenic bacterium Dickeya dadantii 3937.</title>
        <authorList>
            <person name="Glasner J.D."/>
            <person name="Yang C.H."/>
            <person name="Reverchon S."/>
            <person name="Hugouvieux-Cotte-Pattat N."/>
            <person name="Condemine G."/>
            <person name="Bohin J.P."/>
            <person name="Van Gijsegem F."/>
            <person name="Yang S."/>
            <person name="Franza T."/>
            <person name="Expert D."/>
            <person name="Plunkett G. III"/>
            <person name="San Francisco M.J."/>
            <person name="Charkowski A.O."/>
            <person name="Py B."/>
            <person name="Bell K."/>
            <person name="Rauscher L."/>
            <person name="Rodriguez-Palenzuela P."/>
            <person name="Toussaint A."/>
            <person name="Holeva M.C."/>
            <person name="He S.Y."/>
            <person name="Douet V."/>
            <person name="Boccara M."/>
            <person name="Blanco C."/>
            <person name="Toth I."/>
            <person name="Anderson B.D."/>
            <person name="Biehl B.S."/>
            <person name="Mau B."/>
            <person name="Flynn S.M."/>
            <person name="Barras F."/>
            <person name="Lindeberg M."/>
            <person name="Birch P.R."/>
            <person name="Tsuyumu S."/>
            <person name="Shi X."/>
            <person name="Hibbing M."/>
            <person name="Yap M.N."/>
            <person name="Carpentier M."/>
            <person name="Dassa E."/>
            <person name="Umehara M."/>
            <person name="Kim J.F."/>
            <person name="Rusch M."/>
            <person name="Soni P."/>
            <person name="Mayhew G.F."/>
            <person name="Fouts D.E."/>
            <person name="Gill S.R."/>
            <person name="Blattner F.R."/>
            <person name="Keen N.T."/>
            <person name="Perna N.T."/>
        </authorList>
    </citation>
    <scope>NUCLEOTIDE SEQUENCE [LARGE SCALE GENOMIC DNA]</scope>
    <source>
        <strain>3937</strain>
    </source>
</reference>